<evidence type="ECO:0000255" key="1">
    <source>
        <dbReference type="HAMAP-Rule" id="MF_00457"/>
    </source>
</evidence>
<sequence length="227" mass="24861">MKVSYHGHSVVKIETNGKVIVIDPFLTGNPKTDLKAEDVKVDAILLSHGHGDHVGDTVELAKKNNAVVVAPFELATFLSWQGVKTHPMHIGGSHEFDFGKVKFTQAFHGSSYIDEENKTITYTGMPAGILFTAEEKTVYHAGDTALFSDMKLIGELNNVDVAFLPIGDNFTMGPEDAVLAAKWVQAKTVVPMHYNTFPVIEQDPYQFVEKLQNCTGKVLEAGESITL</sequence>
<comment type="similarity">
    <text evidence="1">Belongs to the UPF0173 family.</text>
</comment>
<reference key="1">
    <citation type="submission" date="2008-10" db="EMBL/GenBank/DDBJ databases">
        <title>Genome sequence of Bacillus cereus AH187.</title>
        <authorList>
            <person name="Dodson R.J."/>
            <person name="Durkin A.S."/>
            <person name="Rosovitz M.J."/>
            <person name="Rasko D.A."/>
            <person name="Kolsto A.B."/>
            <person name="Okstad O.A."/>
            <person name="Ravel J."/>
            <person name="Sutton G."/>
        </authorList>
    </citation>
    <scope>NUCLEOTIDE SEQUENCE [LARGE SCALE GENOMIC DNA]</scope>
    <source>
        <strain>AH187</strain>
    </source>
</reference>
<name>Y4741_BACC7</name>
<accession>B7HRQ4</accession>
<feature type="chain" id="PRO_1000197807" description="UPF0173 metal-dependent hydrolase BCAH187_A4741">
    <location>
        <begin position="1"/>
        <end position="227"/>
    </location>
</feature>
<gene>
    <name type="ordered locus">BCAH187_A4741</name>
</gene>
<dbReference type="EMBL" id="CP001177">
    <property type="protein sequence ID" value="ACJ77676.1"/>
    <property type="molecule type" value="Genomic_DNA"/>
</dbReference>
<dbReference type="SMR" id="B7HRQ4"/>
<dbReference type="KEGG" id="bcr:BCAH187_A4741"/>
<dbReference type="HOGENOM" id="CLU_070010_4_1_9"/>
<dbReference type="Proteomes" id="UP000002214">
    <property type="component" value="Chromosome"/>
</dbReference>
<dbReference type="GO" id="GO:0016787">
    <property type="term" value="F:hydrolase activity"/>
    <property type="evidence" value="ECO:0007669"/>
    <property type="project" value="UniProtKB-UniRule"/>
</dbReference>
<dbReference type="Gene3D" id="3.60.15.10">
    <property type="entry name" value="Ribonuclease Z/Hydroxyacylglutathione hydrolase-like"/>
    <property type="match status" value="1"/>
</dbReference>
<dbReference type="HAMAP" id="MF_00457">
    <property type="entry name" value="UPF0173"/>
    <property type="match status" value="1"/>
</dbReference>
<dbReference type="InterPro" id="IPR001279">
    <property type="entry name" value="Metallo-B-lactamas"/>
</dbReference>
<dbReference type="InterPro" id="IPR036866">
    <property type="entry name" value="RibonucZ/Hydroxyglut_hydro"/>
</dbReference>
<dbReference type="InterPro" id="IPR022877">
    <property type="entry name" value="UPF0173"/>
</dbReference>
<dbReference type="InterPro" id="IPR050114">
    <property type="entry name" value="UPF0173_UPF0282_UlaG_hydrolase"/>
</dbReference>
<dbReference type="NCBIfam" id="NF001911">
    <property type="entry name" value="PRK00685.1"/>
    <property type="match status" value="1"/>
</dbReference>
<dbReference type="PANTHER" id="PTHR43546:SF3">
    <property type="entry name" value="UPF0173 METAL-DEPENDENT HYDROLASE MJ1163"/>
    <property type="match status" value="1"/>
</dbReference>
<dbReference type="PANTHER" id="PTHR43546">
    <property type="entry name" value="UPF0173 METAL-DEPENDENT HYDROLASE MJ1163-RELATED"/>
    <property type="match status" value="1"/>
</dbReference>
<dbReference type="Pfam" id="PF12706">
    <property type="entry name" value="Lactamase_B_2"/>
    <property type="match status" value="1"/>
</dbReference>
<dbReference type="SMART" id="SM00849">
    <property type="entry name" value="Lactamase_B"/>
    <property type="match status" value="1"/>
</dbReference>
<dbReference type="SUPFAM" id="SSF56281">
    <property type="entry name" value="Metallo-hydrolase/oxidoreductase"/>
    <property type="match status" value="1"/>
</dbReference>
<proteinExistence type="inferred from homology"/>
<organism>
    <name type="scientific">Bacillus cereus (strain AH187)</name>
    <dbReference type="NCBI Taxonomy" id="405534"/>
    <lineage>
        <taxon>Bacteria</taxon>
        <taxon>Bacillati</taxon>
        <taxon>Bacillota</taxon>
        <taxon>Bacilli</taxon>
        <taxon>Bacillales</taxon>
        <taxon>Bacillaceae</taxon>
        <taxon>Bacillus</taxon>
        <taxon>Bacillus cereus group</taxon>
    </lineage>
</organism>
<protein>
    <recommendedName>
        <fullName evidence="1">UPF0173 metal-dependent hydrolase BCAH187_A4741</fullName>
    </recommendedName>
</protein>
<keyword id="KW-0378">Hydrolase</keyword>